<keyword id="KW-0548">Nucleotidyltransferase</keyword>
<keyword id="KW-1185">Reference proteome</keyword>
<keyword id="KW-0808">Transferase</keyword>
<name>HASC1_STRP1</name>
<dbReference type="EC" id="2.7.7.9"/>
<dbReference type="EMBL" id="AE004092">
    <property type="protein sequence ID" value="AAK34830.1"/>
    <property type="molecule type" value="Genomic_DNA"/>
</dbReference>
<dbReference type="EMBL" id="CP000017">
    <property type="protein sequence ID" value="AAZ52471.1"/>
    <property type="molecule type" value="Genomic_DNA"/>
</dbReference>
<dbReference type="RefSeq" id="NP_270109.1">
    <property type="nucleotide sequence ID" value="NC_002737.2"/>
</dbReference>
<dbReference type="SMR" id="P0C0I9"/>
<dbReference type="PaxDb" id="1314-HKU360_01963"/>
<dbReference type="KEGG" id="spy:SPy_2202"/>
<dbReference type="KEGG" id="spz:M5005_Spy1853"/>
<dbReference type="PATRIC" id="fig|160490.10.peg.1907"/>
<dbReference type="HOGENOM" id="CLU_029499_1_2_9"/>
<dbReference type="OMA" id="MHYVRQG"/>
<dbReference type="UniPathway" id="UPA00215"/>
<dbReference type="Proteomes" id="UP000000750">
    <property type="component" value="Chromosome"/>
</dbReference>
<dbReference type="GO" id="GO:0003983">
    <property type="term" value="F:UTP:glucose-1-phosphate uridylyltransferase activity"/>
    <property type="evidence" value="ECO:0007669"/>
    <property type="project" value="UniProtKB-EC"/>
</dbReference>
<dbReference type="GO" id="GO:0009058">
    <property type="term" value="P:biosynthetic process"/>
    <property type="evidence" value="ECO:0007669"/>
    <property type="project" value="InterPro"/>
</dbReference>
<dbReference type="GO" id="GO:0006011">
    <property type="term" value="P:UDP-alpha-D-glucose metabolic process"/>
    <property type="evidence" value="ECO:0007669"/>
    <property type="project" value="InterPro"/>
</dbReference>
<dbReference type="CDD" id="cd02541">
    <property type="entry name" value="UGPase_prokaryotic"/>
    <property type="match status" value="1"/>
</dbReference>
<dbReference type="Gene3D" id="3.90.550.10">
    <property type="entry name" value="Spore Coat Polysaccharide Biosynthesis Protein SpsA, Chain A"/>
    <property type="match status" value="1"/>
</dbReference>
<dbReference type="InterPro" id="IPR005771">
    <property type="entry name" value="GalU_uridylyltTrfase_bac/arc"/>
</dbReference>
<dbReference type="InterPro" id="IPR005835">
    <property type="entry name" value="NTP_transferase_dom"/>
</dbReference>
<dbReference type="InterPro" id="IPR029044">
    <property type="entry name" value="Nucleotide-diphossugar_trans"/>
</dbReference>
<dbReference type="NCBIfam" id="TIGR01099">
    <property type="entry name" value="galU"/>
    <property type="match status" value="1"/>
</dbReference>
<dbReference type="PANTHER" id="PTHR43197">
    <property type="entry name" value="UTP--GLUCOSE-1-PHOSPHATE URIDYLYLTRANSFERASE"/>
    <property type="match status" value="1"/>
</dbReference>
<dbReference type="PANTHER" id="PTHR43197:SF1">
    <property type="entry name" value="UTP--GLUCOSE-1-PHOSPHATE URIDYLYLTRANSFERASE"/>
    <property type="match status" value="1"/>
</dbReference>
<dbReference type="Pfam" id="PF00483">
    <property type="entry name" value="NTP_transferase"/>
    <property type="match status" value="1"/>
</dbReference>
<dbReference type="SUPFAM" id="SSF53448">
    <property type="entry name" value="Nucleotide-diphospho-sugar transferases"/>
    <property type="match status" value="1"/>
</dbReference>
<proteinExistence type="inferred from homology"/>
<gene>
    <name type="primary">hasC1</name>
    <name type="synonym">hasC</name>
    <name type="ordered locus">SPy_2202</name>
    <name type="ordered locus">M5005_Spy1853</name>
</gene>
<organism>
    <name type="scientific">Streptococcus pyogenes serotype M1</name>
    <dbReference type="NCBI Taxonomy" id="301447"/>
    <lineage>
        <taxon>Bacteria</taxon>
        <taxon>Bacillati</taxon>
        <taxon>Bacillota</taxon>
        <taxon>Bacilli</taxon>
        <taxon>Lactobacillales</taxon>
        <taxon>Streptococcaceae</taxon>
        <taxon>Streptococcus</taxon>
    </lineage>
</organism>
<reference key="1">
    <citation type="journal article" date="2001" name="Proc. Natl. Acad. Sci. U.S.A.">
        <title>Complete genome sequence of an M1 strain of Streptococcus pyogenes.</title>
        <authorList>
            <person name="Ferretti J.J."/>
            <person name="McShan W.M."/>
            <person name="Ajdic D.J."/>
            <person name="Savic D.J."/>
            <person name="Savic G."/>
            <person name="Lyon K."/>
            <person name="Primeaux C."/>
            <person name="Sezate S."/>
            <person name="Suvorov A.N."/>
            <person name="Kenton S."/>
            <person name="Lai H.S."/>
            <person name="Lin S.P."/>
            <person name="Qian Y."/>
            <person name="Jia H.G."/>
            <person name="Najar F.Z."/>
            <person name="Ren Q."/>
            <person name="Zhu H."/>
            <person name="Song L."/>
            <person name="White J."/>
            <person name="Yuan X."/>
            <person name="Clifton S.W."/>
            <person name="Roe B.A."/>
            <person name="McLaughlin R.E."/>
        </authorList>
    </citation>
    <scope>NUCLEOTIDE SEQUENCE [LARGE SCALE GENOMIC DNA]</scope>
    <source>
        <strain>ATCC 700294 / SF370 / Serotype M1</strain>
    </source>
</reference>
<reference key="2">
    <citation type="journal article" date="2005" name="J. Infect. Dis.">
        <title>Evolutionary origin and emergence of a highly successful clone of serotype M1 group A Streptococcus involved multiple horizontal gene transfer events.</title>
        <authorList>
            <person name="Sumby P."/>
            <person name="Porcella S.F."/>
            <person name="Madrigal A.G."/>
            <person name="Barbian K.D."/>
            <person name="Virtaneva K."/>
            <person name="Ricklefs S.M."/>
            <person name="Sturdevant D.E."/>
            <person name="Graham M.R."/>
            <person name="Vuopio-Varkila J."/>
            <person name="Hoe N.P."/>
            <person name="Musser J.M."/>
        </authorList>
    </citation>
    <scope>NUCLEOTIDE SEQUENCE [LARGE SCALE GENOMIC DNA]</scope>
    <source>
        <strain>ATCC BAA-947 / MGAS5005 / Serotype M1</strain>
    </source>
</reference>
<comment type="catalytic activity">
    <reaction>
        <text>alpha-D-glucose 1-phosphate + UTP + H(+) = UDP-alpha-D-glucose + diphosphate</text>
        <dbReference type="Rhea" id="RHEA:19889"/>
        <dbReference type="ChEBI" id="CHEBI:15378"/>
        <dbReference type="ChEBI" id="CHEBI:33019"/>
        <dbReference type="ChEBI" id="CHEBI:46398"/>
        <dbReference type="ChEBI" id="CHEBI:58601"/>
        <dbReference type="ChEBI" id="CHEBI:58885"/>
        <dbReference type="EC" id="2.7.7.9"/>
    </reaction>
</comment>
<comment type="pathway">
    <text>Carbohydrate metabolism; nucleotide-sugar metabolism.</text>
</comment>
<comment type="similarity">
    <text evidence="1">Belongs to the UDPGP type 2 family.</text>
</comment>
<feature type="chain" id="PRO_0000201368" description="UTP--glucose-1-phosphate uridylyltransferase 1">
    <location>
        <begin position="1"/>
        <end position="304"/>
    </location>
</feature>
<accession>P0C0I9</accession>
<accession>Q48W04</accession>
<accession>Q54713</accession>
<protein>
    <recommendedName>
        <fullName>UTP--glucose-1-phosphate uridylyltransferase 1</fullName>
        <ecNumber>2.7.7.9</ecNumber>
    </recommendedName>
    <alternativeName>
        <fullName>Alpha-D-glucosyl-1-phosphate uridylyltransferase 1</fullName>
    </alternativeName>
    <alternativeName>
        <fullName>UDP-glucose pyrophosphorylase 1</fullName>
        <shortName>UDPGP 1</shortName>
    </alternativeName>
    <alternativeName>
        <fullName>Uridine diphosphoglucose pyrophosphorylase 1</fullName>
    </alternativeName>
</protein>
<sequence length="304" mass="33650">MTKVRKAIIPAAGLGTRFLPATKALAKEMLPIVDKPTIQFIVEEALKSGIEEILVVTGKAKRSIEDHFDSNFELEYNLQAKGKNELLKLVDETTAINLHFIRQSHPRGLGDAVLQAKAFVGNEPFVVMLGDDLMDITNASAKPLTKQLMEDYDKTHASTIAVMKVPHEDVSSYGVIAPQGKAVKGLYSVDTFVEKPQPEDAPSDLAIIGRYLLTPEIFGILERQTPGAGNEVQLTDAIDTLNKTQRVFAREFKGNRYDVGDKFGFMKTSIDYALEHPQVKEDLKNYIIKLGKALEKSKVPTHSK</sequence>
<evidence type="ECO:0000305" key="1"/>